<accession>Q8VYI0</accession>
<accession>Q9SHY4</accession>
<protein>
    <recommendedName>
        <fullName evidence="7">Sm-like protein LSM8</fullName>
        <shortName evidence="6">AtLSM8</shortName>
    </recommendedName>
    <alternativeName>
        <fullName evidence="7">U6 snRNA-associated Sm-like protein LSM8</fullName>
    </alternativeName>
</protein>
<reference key="1">
    <citation type="journal article" date="2000" name="Nature">
        <title>Sequence and analysis of chromosome 1 of the plant Arabidopsis thaliana.</title>
        <authorList>
            <person name="Theologis A."/>
            <person name="Ecker J.R."/>
            <person name="Palm C.J."/>
            <person name="Federspiel N.A."/>
            <person name="Kaul S."/>
            <person name="White O."/>
            <person name="Alonso J."/>
            <person name="Altafi H."/>
            <person name="Araujo R."/>
            <person name="Bowman C.L."/>
            <person name="Brooks S.Y."/>
            <person name="Buehler E."/>
            <person name="Chan A."/>
            <person name="Chao Q."/>
            <person name="Chen H."/>
            <person name="Cheuk R.F."/>
            <person name="Chin C.W."/>
            <person name="Chung M.K."/>
            <person name="Conn L."/>
            <person name="Conway A.B."/>
            <person name="Conway A.R."/>
            <person name="Creasy T.H."/>
            <person name="Dewar K."/>
            <person name="Dunn P."/>
            <person name="Etgu P."/>
            <person name="Feldblyum T.V."/>
            <person name="Feng J.-D."/>
            <person name="Fong B."/>
            <person name="Fujii C.Y."/>
            <person name="Gill J.E."/>
            <person name="Goldsmith A.D."/>
            <person name="Haas B."/>
            <person name="Hansen N.F."/>
            <person name="Hughes B."/>
            <person name="Huizar L."/>
            <person name="Hunter J.L."/>
            <person name="Jenkins J."/>
            <person name="Johnson-Hopson C."/>
            <person name="Khan S."/>
            <person name="Khaykin E."/>
            <person name="Kim C.J."/>
            <person name="Koo H.L."/>
            <person name="Kremenetskaia I."/>
            <person name="Kurtz D.B."/>
            <person name="Kwan A."/>
            <person name="Lam B."/>
            <person name="Langin-Hooper S."/>
            <person name="Lee A."/>
            <person name="Lee J.M."/>
            <person name="Lenz C.A."/>
            <person name="Li J.H."/>
            <person name="Li Y.-P."/>
            <person name="Lin X."/>
            <person name="Liu S.X."/>
            <person name="Liu Z.A."/>
            <person name="Luros J.S."/>
            <person name="Maiti R."/>
            <person name="Marziali A."/>
            <person name="Militscher J."/>
            <person name="Miranda M."/>
            <person name="Nguyen M."/>
            <person name="Nierman W.C."/>
            <person name="Osborne B.I."/>
            <person name="Pai G."/>
            <person name="Peterson J."/>
            <person name="Pham P.K."/>
            <person name="Rizzo M."/>
            <person name="Rooney T."/>
            <person name="Rowley D."/>
            <person name="Sakano H."/>
            <person name="Salzberg S.L."/>
            <person name="Schwartz J.R."/>
            <person name="Shinn P."/>
            <person name="Southwick A.M."/>
            <person name="Sun H."/>
            <person name="Tallon L.J."/>
            <person name="Tambunga G."/>
            <person name="Toriumi M.J."/>
            <person name="Town C.D."/>
            <person name="Utterback T."/>
            <person name="Van Aken S."/>
            <person name="Vaysberg M."/>
            <person name="Vysotskaia V.S."/>
            <person name="Walker M."/>
            <person name="Wu D."/>
            <person name="Yu G."/>
            <person name="Fraser C.M."/>
            <person name="Venter J.C."/>
            <person name="Davis R.W."/>
        </authorList>
    </citation>
    <scope>NUCLEOTIDE SEQUENCE [LARGE SCALE GENOMIC DNA]</scope>
    <scope>GENOME REANNOTATION</scope>
    <source>
        <strain>cv. Columbia</strain>
    </source>
</reference>
<reference key="2">
    <citation type="journal article" date="2017" name="Plant J.">
        <title>Araport11: a complete reannotation of the Arabidopsis thaliana reference genome.</title>
        <authorList>
            <person name="Cheng C.Y."/>
            <person name="Krishnakumar V."/>
            <person name="Chan A.P."/>
            <person name="Thibaud-Nissen F."/>
            <person name="Schobel S."/>
            <person name="Town C.D."/>
        </authorList>
    </citation>
    <scope>GENOME REANNOTATION</scope>
    <source>
        <strain>cv. Columbia</strain>
    </source>
</reference>
<reference key="3">
    <citation type="journal article" date="2003" name="Science">
        <title>Empirical analysis of transcriptional activity in the Arabidopsis genome.</title>
        <authorList>
            <person name="Yamada K."/>
            <person name="Lim J."/>
            <person name="Dale J.M."/>
            <person name="Chen H."/>
            <person name="Shinn P."/>
            <person name="Palm C.J."/>
            <person name="Southwick A.M."/>
            <person name="Wu H.C."/>
            <person name="Kim C.J."/>
            <person name="Nguyen M."/>
            <person name="Pham P.K."/>
            <person name="Cheuk R.F."/>
            <person name="Karlin-Newmann G."/>
            <person name="Liu S.X."/>
            <person name="Lam B."/>
            <person name="Sakano H."/>
            <person name="Wu T."/>
            <person name="Yu G."/>
            <person name="Miranda M."/>
            <person name="Quach H.L."/>
            <person name="Tripp M."/>
            <person name="Chang C.H."/>
            <person name="Lee J.M."/>
            <person name="Toriumi M.J."/>
            <person name="Chan M.M."/>
            <person name="Tang C.C."/>
            <person name="Onodera C.S."/>
            <person name="Deng J.M."/>
            <person name="Akiyama K."/>
            <person name="Ansari Y."/>
            <person name="Arakawa T."/>
            <person name="Banh J."/>
            <person name="Banno F."/>
            <person name="Bowser L."/>
            <person name="Brooks S.Y."/>
            <person name="Carninci P."/>
            <person name="Chao Q."/>
            <person name="Choy N."/>
            <person name="Enju A."/>
            <person name="Goldsmith A.D."/>
            <person name="Gurjal M."/>
            <person name="Hansen N.F."/>
            <person name="Hayashizaki Y."/>
            <person name="Johnson-Hopson C."/>
            <person name="Hsuan V.W."/>
            <person name="Iida K."/>
            <person name="Karnes M."/>
            <person name="Khan S."/>
            <person name="Koesema E."/>
            <person name="Ishida J."/>
            <person name="Jiang P.X."/>
            <person name="Jones T."/>
            <person name="Kawai J."/>
            <person name="Kamiya A."/>
            <person name="Meyers C."/>
            <person name="Nakajima M."/>
            <person name="Narusaka M."/>
            <person name="Seki M."/>
            <person name="Sakurai T."/>
            <person name="Satou M."/>
            <person name="Tamse R."/>
            <person name="Vaysberg M."/>
            <person name="Wallender E.K."/>
            <person name="Wong C."/>
            <person name="Yamamura Y."/>
            <person name="Yuan S."/>
            <person name="Shinozaki K."/>
            <person name="Davis R.W."/>
            <person name="Theologis A."/>
            <person name="Ecker J.R."/>
        </authorList>
    </citation>
    <scope>NUCLEOTIDE SEQUENCE [LARGE SCALE MRNA]</scope>
    <source>
        <strain>cv. Columbia</strain>
    </source>
</reference>
<reference key="4">
    <citation type="submission" date="2002-03" db="EMBL/GenBank/DDBJ databases">
        <title>Full-length cDNA from Arabidopsis thaliana.</title>
        <authorList>
            <person name="Brover V.V."/>
            <person name="Troukhan M.E."/>
            <person name="Alexandrov N.A."/>
            <person name="Lu Y.-P."/>
            <person name="Flavell R.B."/>
            <person name="Feldmann K.A."/>
        </authorList>
    </citation>
    <scope>NUCLEOTIDE SEQUENCE [LARGE SCALE MRNA]</scope>
</reference>
<reference key="5">
    <citation type="journal article" date="2012" name="Plant Cell">
        <title>LSM proteins provide accurate splicing and decay of selected transcripts to ensure normal Arabidopsis development.</title>
        <authorList>
            <person name="Perea-Resa C."/>
            <person name="Hernandez-Verdeja T."/>
            <person name="Lopez-Cobollo R."/>
            <person name="del Mar Castellano M."/>
            <person name="Salinas J."/>
        </authorList>
    </citation>
    <scope>FUNCTION</scope>
    <scope>SUBUNIT</scope>
    <scope>INTERACTION WITH LSM2 AND LSM4</scope>
    <scope>SUBCELLULAR LOCATION</scope>
    <scope>TISSUE SPECIFICITY</scope>
    <scope>DISRUPTION PHENOTYPE</scope>
    <scope>GENE FAMILY</scope>
</reference>
<reference key="6">
    <citation type="journal article" date="2013" name="Nucleic Acids Res.">
        <title>Arabidopsis thaliana LSM proteins function in mRNA splicing and degradation.</title>
        <authorList>
            <person name="Golisz A."/>
            <person name="Sikorski P.J."/>
            <person name="Kruszka K."/>
            <person name="Kufel J."/>
        </authorList>
    </citation>
    <scope>IDENTIFICATION BY MASS SPECTROMETRY</scope>
    <scope>FUNCTION</scope>
    <scope>SUBUNIT</scope>
    <scope>SUBCELLULAR LOCATION</scope>
    <scope>TISSUE SPECIFICITY</scope>
</reference>
<reference key="7">
    <citation type="journal article" date="2020" name="Nucleic Acids Res.">
        <title>Prefoldins contribute to maintaining the levels of the spliceosome LSM2-8 complex through Hsp90 in Arabidopsis.</title>
        <authorList>
            <person name="Esteve-Bruna D."/>
            <person name="Carrasco-Lopez C."/>
            <person name="Blanco-Tourinan N."/>
            <person name="Iserte J."/>
            <person name="Calleja-Cabrera J."/>
            <person name="Perea-Resa C."/>
            <person name="Urbez C."/>
            <person name="Carrasco P."/>
            <person name="Yanovsky M.J."/>
            <person name="Blazquez M.A."/>
            <person name="Salinas J."/>
            <person name="Alabadi D."/>
        </authorList>
    </citation>
    <scope>FUNCTION</scope>
    <scope>DISRUPTION PHENOTYPE</scope>
    <scope>INTERACTION WITH PFD1; PFD2; PFD3; PFD4; PFD5 AND PFD6</scope>
    <source>
        <strain>cv. Columbia</strain>
    </source>
</reference>
<dbReference type="EMBL" id="AC007234">
    <property type="protein sequence ID" value="AAF23841.1"/>
    <property type="status" value="ALT_SEQ"/>
    <property type="molecule type" value="Genomic_DNA"/>
</dbReference>
<dbReference type="EMBL" id="CP002684">
    <property type="protein sequence ID" value="AEE34413.1"/>
    <property type="molecule type" value="Genomic_DNA"/>
</dbReference>
<dbReference type="EMBL" id="CP002684">
    <property type="protein sequence ID" value="AEE34414.1"/>
    <property type="molecule type" value="Genomic_DNA"/>
</dbReference>
<dbReference type="EMBL" id="AY070767">
    <property type="protein sequence ID" value="AAL50104.1"/>
    <property type="molecule type" value="mRNA"/>
</dbReference>
<dbReference type="EMBL" id="AY094059">
    <property type="protein sequence ID" value="AAM16215.1"/>
    <property type="molecule type" value="mRNA"/>
</dbReference>
<dbReference type="EMBL" id="AY087015">
    <property type="protein sequence ID" value="AAM64576.1"/>
    <property type="molecule type" value="mRNA"/>
</dbReference>
<dbReference type="PIR" id="G96681">
    <property type="entry name" value="G96681"/>
</dbReference>
<dbReference type="RefSeq" id="NP_001031238.1">
    <molecule id="Q8VYI0-1"/>
    <property type="nucleotide sequence ID" value="NM_001036161.1"/>
</dbReference>
<dbReference type="RefSeq" id="NP_176747.1">
    <molecule id="Q8VYI0-1"/>
    <property type="nucleotide sequence ID" value="NM_105244.4"/>
</dbReference>
<dbReference type="SMR" id="Q8VYI0"/>
<dbReference type="ComplexPortal" id="CPX-1309">
    <property type="entry name" value="LSM2-8 complex, variant LSM3A-LSM6A"/>
</dbReference>
<dbReference type="ComplexPortal" id="CPX-1352">
    <property type="entry name" value="LSM2-8 complex, variant LSM3A-LSM6B"/>
</dbReference>
<dbReference type="ComplexPortal" id="CPX-1353">
    <property type="entry name" value="LSM2-8 complex, variant LSM3B-LSM6A"/>
</dbReference>
<dbReference type="ComplexPortal" id="CPX-1354">
    <property type="entry name" value="LSM2-8 complex, variant LSM3B-LSM6B"/>
</dbReference>
<dbReference type="FunCoup" id="Q8VYI0">
    <property type="interactions" value="3701"/>
</dbReference>
<dbReference type="STRING" id="3702.Q8VYI0"/>
<dbReference type="ProteomicsDB" id="238529">
    <molecule id="Q8VYI0-1"/>
</dbReference>
<dbReference type="EnsemblPlants" id="AT1G65700.1">
    <molecule id="Q8VYI0-1"/>
    <property type="protein sequence ID" value="AT1G65700.1"/>
    <property type="gene ID" value="AT1G65700"/>
</dbReference>
<dbReference type="EnsemblPlants" id="AT1G65700.2">
    <molecule id="Q8VYI0-1"/>
    <property type="protein sequence ID" value="AT1G65700.2"/>
    <property type="gene ID" value="AT1G65700"/>
</dbReference>
<dbReference type="GeneID" id="842881"/>
<dbReference type="Gramene" id="AT1G65700.1">
    <molecule id="Q8VYI0-1"/>
    <property type="protein sequence ID" value="AT1G65700.1"/>
    <property type="gene ID" value="AT1G65700"/>
</dbReference>
<dbReference type="Gramene" id="AT1G65700.2">
    <molecule id="Q8VYI0-1"/>
    <property type="protein sequence ID" value="AT1G65700.2"/>
    <property type="gene ID" value="AT1G65700"/>
</dbReference>
<dbReference type="KEGG" id="ath:AT1G65700"/>
<dbReference type="Araport" id="AT1G65700"/>
<dbReference type="TAIR" id="AT1G65700">
    <property type="gene designation" value="LSM8"/>
</dbReference>
<dbReference type="HOGENOM" id="CLU_076902_8_2_1"/>
<dbReference type="InParanoid" id="Q8VYI0"/>
<dbReference type="OMA" id="AACDQTT"/>
<dbReference type="OrthoDB" id="10263346at2759"/>
<dbReference type="PhylomeDB" id="Q8VYI0"/>
<dbReference type="PRO" id="PR:Q8VYI0"/>
<dbReference type="Proteomes" id="UP000006548">
    <property type="component" value="Chromosome 1"/>
</dbReference>
<dbReference type="ExpressionAtlas" id="Q8VYI0">
    <property type="expression patterns" value="baseline and differential"/>
</dbReference>
<dbReference type="GO" id="GO:0120115">
    <property type="term" value="C:Lsm2-8 complex"/>
    <property type="evidence" value="ECO:0000315"/>
    <property type="project" value="ComplexPortal"/>
</dbReference>
<dbReference type="GO" id="GO:0005634">
    <property type="term" value="C:nucleus"/>
    <property type="evidence" value="ECO:0000314"/>
    <property type="project" value="ComplexPortal"/>
</dbReference>
<dbReference type="GO" id="GO:0005681">
    <property type="term" value="C:spliceosomal complex"/>
    <property type="evidence" value="ECO:0007669"/>
    <property type="project" value="UniProtKB-KW"/>
</dbReference>
<dbReference type="GO" id="GO:0046540">
    <property type="term" value="C:U4/U6 x U5 tri-snRNP complex"/>
    <property type="evidence" value="ECO:0007669"/>
    <property type="project" value="InterPro"/>
</dbReference>
<dbReference type="GO" id="GO:0005688">
    <property type="term" value="C:U6 snRNP"/>
    <property type="evidence" value="ECO:0007669"/>
    <property type="project" value="InterPro"/>
</dbReference>
<dbReference type="GO" id="GO:0003723">
    <property type="term" value="F:RNA binding"/>
    <property type="evidence" value="ECO:0007669"/>
    <property type="project" value="UniProtKB-KW"/>
</dbReference>
<dbReference type="GO" id="GO:0000398">
    <property type="term" value="P:mRNA splicing, via spliceosome"/>
    <property type="evidence" value="ECO:0000315"/>
    <property type="project" value="ComplexPortal"/>
</dbReference>
<dbReference type="CDD" id="cd01727">
    <property type="entry name" value="LSm8"/>
    <property type="match status" value="1"/>
</dbReference>
<dbReference type="FunFam" id="2.30.30.100:FF:000035">
    <property type="entry name" value="U6 snRNA-associated Sm-like protein LSm8"/>
    <property type="match status" value="1"/>
</dbReference>
<dbReference type="Gene3D" id="2.30.30.100">
    <property type="match status" value="1"/>
</dbReference>
<dbReference type="InterPro" id="IPR034103">
    <property type="entry name" value="Lsm8"/>
</dbReference>
<dbReference type="InterPro" id="IPR010920">
    <property type="entry name" value="LSM_dom_sf"/>
</dbReference>
<dbReference type="InterPro" id="IPR044642">
    <property type="entry name" value="PTHR15588"/>
</dbReference>
<dbReference type="InterPro" id="IPR047575">
    <property type="entry name" value="Sm"/>
</dbReference>
<dbReference type="InterPro" id="IPR001163">
    <property type="entry name" value="Sm_dom_euk/arc"/>
</dbReference>
<dbReference type="PANTHER" id="PTHR15588">
    <property type="entry name" value="LSM1"/>
    <property type="match status" value="1"/>
</dbReference>
<dbReference type="PANTHER" id="PTHR15588:SF9">
    <property type="entry name" value="U6 SNRNA-ASSOCIATED SM-LIKE PROTEIN LSM8"/>
    <property type="match status" value="1"/>
</dbReference>
<dbReference type="Pfam" id="PF01423">
    <property type="entry name" value="LSM"/>
    <property type="match status" value="1"/>
</dbReference>
<dbReference type="SMART" id="SM00651">
    <property type="entry name" value="Sm"/>
    <property type="match status" value="1"/>
</dbReference>
<dbReference type="SUPFAM" id="SSF50182">
    <property type="entry name" value="Sm-like ribonucleoproteins"/>
    <property type="match status" value="1"/>
</dbReference>
<dbReference type="PROSITE" id="PS52002">
    <property type="entry name" value="SM"/>
    <property type="match status" value="1"/>
</dbReference>
<gene>
    <name evidence="5" type="primary">LSM8</name>
    <name evidence="8" type="ordered locus">At1g65700</name>
    <name evidence="9" type="ORF">F1E22.8</name>
</gene>
<comment type="function">
    <text evidence="2 3 4">Component of the nuclear LSM2-LSM8 complex which is involved splicing nuclear mRNAs. LSM2-LSM8 binds directly to the U6 small nuclear RNAs (snRNAs). LSM8 is essential for the formation of the nuclear LSM2-LSM8 complex involved in the accurate splicing of selected development-related mRNAs through the stabilization of the spliceosomal U6 snRNA (PubMed:32396196). Plays a critical role in the regulation of development-related gene expression.</text>
</comment>
<comment type="subunit">
    <text evidence="2 3 4">Component of the heptameric LSM2-LSM8 complex that forms a seven-membered ring structure with a donut shape. The LSM subunits are arranged in the order LSM8, LSM2, LSM3, LSM6, LSM5, LSM7 and LSM4 (PubMed:23221597, PubMed:23620288). LSM8 subunit interacts only with its two neighboring subunits, LSM2 and LSM4 (PubMed:23221597). Interacts with the prefoldin co-chaperone subunits PFD1, PFD2, PFD3, PFD4, PFD5 and PFD6 (PubMed:32396196).</text>
</comment>
<comment type="subcellular location">
    <subcellularLocation>
        <location evidence="2 3">Nucleus</location>
    </subcellularLocation>
</comment>
<comment type="alternative products">
    <event type="alternative splicing"/>
    <isoform>
        <id>Q8VYI0-1</id>
        <name>1</name>
        <sequence type="displayed"/>
    </isoform>
    <text evidence="7">A number of isoforms are produced. According to EST sequences.</text>
</comment>
<comment type="tissue specificity">
    <text evidence="2 3">Expressed in roots, leaves, stems, flowers and siliques.</text>
</comment>
<comment type="disruption phenotype">
    <text evidence="2 4">Developmental alterations, such as reduced root length, alterations in the shape and number of cotyledons, small rosette leaves with short petioles, early flowering, short siliques with reduced seed number and frequently aborted seeds (PubMed:23221597). Lower pre-mRNA splicing events and reduced levels of U6 snRNA, but elevated levels of U4 snRNA (PubMed:32396196).</text>
</comment>
<comment type="similarity">
    <text evidence="7">Belongs to the snRNP Sm proteins family.</text>
</comment>
<comment type="sequence caution" evidence="7">
    <conflict type="erroneous gene model prediction">
        <sequence resource="EMBL-CDS" id="AAF23841"/>
    </conflict>
    <text>The predicted gene has been split into 2 genes: At1g65700 and At1g65710.</text>
</comment>
<feature type="chain" id="PRO_0000431651" description="Sm-like protein LSM8">
    <location>
        <begin position="1"/>
        <end position="98"/>
    </location>
</feature>
<feature type="domain" description="Sm" evidence="1">
    <location>
        <begin position="2"/>
        <end position="78"/>
    </location>
</feature>
<proteinExistence type="evidence at protein level"/>
<organism>
    <name type="scientific">Arabidopsis thaliana</name>
    <name type="common">Mouse-ear cress</name>
    <dbReference type="NCBI Taxonomy" id="3702"/>
    <lineage>
        <taxon>Eukaryota</taxon>
        <taxon>Viridiplantae</taxon>
        <taxon>Streptophyta</taxon>
        <taxon>Embryophyta</taxon>
        <taxon>Tracheophyta</taxon>
        <taxon>Spermatophyta</taxon>
        <taxon>Magnoliopsida</taxon>
        <taxon>eudicotyledons</taxon>
        <taxon>Gunneridae</taxon>
        <taxon>Pentapetalae</taxon>
        <taxon>rosids</taxon>
        <taxon>malvids</taxon>
        <taxon>Brassicales</taxon>
        <taxon>Brassicaceae</taxon>
        <taxon>Camelineae</taxon>
        <taxon>Arabidopsis</taxon>
    </lineage>
</organism>
<keyword id="KW-0025">Alternative splicing</keyword>
<keyword id="KW-0507">mRNA processing</keyword>
<keyword id="KW-0508">mRNA splicing</keyword>
<keyword id="KW-0539">Nucleus</keyword>
<keyword id="KW-1185">Reference proteome</keyword>
<keyword id="KW-0687">Ribonucleoprotein</keyword>
<keyword id="KW-0694">RNA-binding</keyword>
<keyword id="KW-0747">Spliceosome</keyword>
<evidence type="ECO:0000255" key="1">
    <source>
        <dbReference type="PROSITE-ProRule" id="PRU01346"/>
    </source>
</evidence>
<evidence type="ECO:0000269" key="2">
    <source>
    </source>
</evidence>
<evidence type="ECO:0000269" key="3">
    <source>
    </source>
</evidence>
<evidence type="ECO:0000269" key="4">
    <source>
    </source>
</evidence>
<evidence type="ECO:0000303" key="5">
    <source>
    </source>
</evidence>
<evidence type="ECO:0000303" key="6">
    <source>
    </source>
</evidence>
<evidence type="ECO:0000305" key="7"/>
<evidence type="ECO:0000312" key="8">
    <source>
        <dbReference type="Araport" id="AT1G65700"/>
    </source>
</evidence>
<evidence type="ECO:0000312" key="9">
    <source>
        <dbReference type="EMBL" id="AAF23841.1"/>
    </source>
</evidence>
<name>LSM8_ARATH</name>
<sequence length="98" mass="10706">MAATTGLETLVDQIISVITNDGRNIVGVLKGFDQATNIILDESHERVFSTKEGVQQHVLGLYIIRGDNIGVIGELDEELDASLDFSKLRAHPLKPVVH</sequence>